<accession>Q9X5C7</accession>
<accession>Q491B7</accession>
<sequence>MKTNILTIIILSCVFSYGSQLAYADENLKDLKRSLRFAYNITPCDYENVEIAFVTTNSIHINTKQKRSECILYVDSIVSLGITDQFIKGDKVDVFGLPYNFSPPYVDNIYGGIVKHSNQGNKSLQFVGILNQDGKETYLPSEAVRIKKKQFTLQEFDFKIRKFLMEKYNIYDSESRYTSGSLFLATKDSKHYEVDLFNKDDKLLSRDSFFKRYKDNKIFNSEEISHFDIYLKTH</sequence>
<protein>
    <recommendedName>
        <fullName>Exotoxin type G</fullName>
    </recommendedName>
    <alternativeName>
        <fullName>Pyrogenic exotoxin G</fullName>
    </alternativeName>
    <alternativeName>
        <fullName>SPE G</fullName>
    </alternativeName>
</protein>
<proteinExistence type="inferred from homology"/>
<dbReference type="EMBL" id="AF124499">
    <property type="protein sequence ID" value="AAD30988.1"/>
    <property type="molecule type" value="Genomic_DNA"/>
</dbReference>
<dbReference type="EMBL" id="AE004092">
    <property type="protein sequence ID" value="AAK33303.1"/>
    <property type="molecule type" value="Genomic_DNA"/>
</dbReference>
<dbReference type="EMBL" id="CP000017">
    <property type="protein sequence ID" value="AAZ50801.1"/>
    <property type="molecule type" value="Genomic_DNA"/>
</dbReference>
<dbReference type="RefSeq" id="NP_268582.1">
    <property type="nucleotide sequence ID" value="NC_002737.2"/>
</dbReference>
<dbReference type="SMR" id="Q9X5C7"/>
<dbReference type="PaxDb" id="1314-HKU360_00227"/>
<dbReference type="KEGG" id="spy:SPy_0212"/>
<dbReference type="KEGG" id="spz:M5005_Spy0182"/>
<dbReference type="PATRIC" id="fig|160490.10.peg.186"/>
<dbReference type="HOGENOM" id="CLU_093855_1_0_9"/>
<dbReference type="OMA" id="NIHINTG"/>
<dbReference type="Proteomes" id="UP000000750">
    <property type="component" value="Chromosome"/>
</dbReference>
<dbReference type="GO" id="GO:0005576">
    <property type="term" value="C:extracellular region"/>
    <property type="evidence" value="ECO:0007669"/>
    <property type="project" value="InterPro"/>
</dbReference>
<dbReference type="GO" id="GO:0090729">
    <property type="term" value="F:toxin activity"/>
    <property type="evidence" value="ECO:0007669"/>
    <property type="project" value="UniProtKB-KW"/>
</dbReference>
<dbReference type="Gene3D" id="2.40.50.110">
    <property type="match status" value="1"/>
</dbReference>
<dbReference type="Gene3D" id="3.10.20.120">
    <property type="match status" value="1"/>
</dbReference>
<dbReference type="InterPro" id="IPR008992">
    <property type="entry name" value="Enterotoxin"/>
</dbReference>
<dbReference type="InterPro" id="IPR006126">
    <property type="entry name" value="Staph/Strept_toxin_CS"/>
</dbReference>
<dbReference type="InterPro" id="IPR006173">
    <property type="entry name" value="Staph_tox_OB"/>
</dbReference>
<dbReference type="InterPro" id="IPR016091">
    <property type="entry name" value="SuperAg_toxin_C"/>
</dbReference>
<dbReference type="InterPro" id="IPR013307">
    <property type="entry name" value="Superantigen_bac"/>
</dbReference>
<dbReference type="InterPro" id="IPR006123">
    <property type="entry name" value="Toxin_b-grasp_Staph/Strep"/>
</dbReference>
<dbReference type="Pfam" id="PF02876">
    <property type="entry name" value="Stap_Strp_tox_C"/>
    <property type="match status" value="1"/>
</dbReference>
<dbReference type="Pfam" id="PF01123">
    <property type="entry name" value="Stap_Strp_toxin"/>
    <property type="match status" value="1"/>
</dbReference>
<dbReference type="PRINTS" id="PR01898">
    <property type="entry name" value="SAGSUPRFAMLY"/>
</dbReference>
<dbReference type="SUPFAM" id="SSF50203">
    <property type="entry name" value="Bacterial enterotoxins"/>
    <property type="match status" value="1"/>
</dbReference>
<dbReference type="SUPFAM" id="SSF54334">
    <property type="entry name" value="Superantigen toxins, C-terminal domain"/>
    <property type="match status" value="1"/>
</dbReference>
<dbReference type="PROSITE" id="PS00278">
    <property type="entry name" value="STAPH_STREP_TOXIN_2"/>
    <property type="match status" value="1"/>
</dbReference>
<name>SPEG_STRP1</name>
<reference key="1">
    <citation type="journal article" date="1999" name="J. Exp. Med.">
        <title>Identification and characterization of novel superantigens from Streptococcus pyogenes.</title>
        <authorList>
            <person name="Proft T."/>
            <person name="Moffatt S.L."/>
            <person name="Berkahn C.J."/>
            <person name="Fraser J.D."/>
        </authorList>
    </citation>
    <scope>NUCLEOTIDE SEQUENCE [GENOMIC DNA]</scope>
    <source>
        <strain>M1</strain>
    </source>
</reference>
<reference key="2">
    <citation type="journal article" date="2001" name="Proc. Natl. Acad. Sci. U.S.A.">
        <title>Complete genome sequence of an M1 strain of Streptococcus pyogenes.</title>
        <authorList>
            <person name="Ferretti J.J."/>
            <person name="McShan W.M."/>
            <person name="Ajdic D.J."/>
            <person name="Savic D.J."/>
            <person name="Savic G."/>
            <person name="Lyon K."/>
            <person name="Primeaux C."/>
            <person name="Sezate S."/>
            <person name="Suvorov A.N."/>
            <person name="Kenton S."/>
            <person name="Lai H.S."/>
            <person name="Lin S.P."/>
            <person name="Qian Y."/>
            <person name="Jia H.G."/>
            <person name="Najar F.Z."/>
            <person name="Ren Q."/>
            <person name="Zhu H."/>
            <person name="Song L."/>
            <person name="White J."/>
            <person name="Yuan X."/>
            <person name="Clifton S.W."/>
            <person name="Roe B.A."/>
            <person name="McLaughlin R.E."/>
        </authorList>
    </citation>
    <scope>NUCLEOTIDE SEQUENCE [LARGE SCALE GENOMIC DNA]</scope>
    <source>
        <strain>ATCC 700294 / SF370 / Serotype M1</strain>
    </source>
</reference>
<reference key="3">
    <citation type="journal article" date="2005" name="J. Infect. Dis.">
        <title>Evolutionary origin and emergence of a highly successful clone of serotype M1 group A Streptococcus involved multiple horizontal gene transfer events.</title>
        <authorList>
            <person name="Sumby P."/>
            <person name="Porcella S.F."/>
            <person name="Madrigal A.G."/>
            <person name="Barbian K.D."/>
            <person name="Virtaneva K."/>
            <person name="Ricklefs S.M."/>
            <person name="Sturdevant D.E."/>
            <person name="Graham M.R."/>
            <person name="Vuopio-Varkila J."/>
            <person name="Hoe N.P."/>
            <person name="Musser J.M."/>
        </authorList>
    </citation>
    <scope>NUCLEOTIDE SEQUENCE [LARGE SCALE GENOMIC DNA]</scope>
    <source>
        <strain>ATCC BAA-947 / MGAS5005 / Serotype M1</strain>
    </source>
</reference>
<keyword id="KW-1185">Reference proteome</keyword>
<keyword id="KW-0732">Signal</keyword>
<keyword id="KW-0800">Toxin</keyword>
<keyword id="KW-0843">Virulence</keyword>
<gene>
    <name type="primary">speG</name>
    <name type="ordered locus">SPy_0212</name>
    <name type="ordered locus">M5005_Spy0182</name>
</gene>
<evidence type="ECO:0000255" key="1"/>
<evidence type="ECO:0000305" key="2"/>
<feature type="signal peptide" evidence="1">
    <location>
        <begin position="1"/>
        <end position="24"/>
    </location>
</feature>
<feature type="chain" id="PRO_0000035601" description="Exotoxin type G">
    <location>
        <begin position="25"/>
        <end position="234"/>
    </location>
</feature>
<organism>
    <name type="scientific">Streptococcus pyogenes serotype M1</name>
    <dbReference type="NCBI Taxonomy" id="301447"/>
    <lineage>
        <taxon>Bacteria</taxon>
        <taxon>Bacillati</taxon>
        <taxon>Bacillota</taxon>
        <taxon>Bacilli</taxon>
        <taxon>Lactobacillales</taxon>
        <taxon>Streptococcaceae</taxon>
        <taxon>Streptococcus</taxon>
    </lineage>
</organism>
<comment type="function">
    <text>Mitogenic for human peripheral blood lymphocytes.</text>
</comment>
<comment type="miscellaneous">
    <text>Binds to major histocompatibility complex class II beta chain.</text>
</comment>
<comment type="similarity">
    <text evidence="2">Belongs to the staphylococcal/streptococcal toxin family.</text>
</comment>